<dbReference type="EC" id="2.7.11.1" evidence="7 8"/>
<dbReference type="EMBL" id="AL844506">
    <property type="protein sequence ID" value="CAD50923.1"/>
    <property type="molecule type" value="Genomic_DNA"/>
</dbReference>
<dbReference type="RefSeq" id="XP_001349078.1">
    <property type="nucleotide sequence ID" value="XM_001349042.1"/>
</dbReference>
<dbReference type="PDB" id="4QOX">
    <property type="method" value="X-ray"/>
    <property type="resolution" value="2.75 A"/>
    <property type="chains" value="A=10-528"/>
</dbReference>
<dbReference type="PDB" id="4RGJ">
    <property type="method" value="X-ray"/>
    <property type="resolution" value="2.30 A"/>
    <property type="chains" value="A=10-528"/>
</dbReference>
<dbReference type="PDBsum" id="4QOX"/>
<dbReference type="PDBsum" id="4RGJ"/>
<dbReference type="SMR" id="Q8IBS5"/>
<dbReference type="BioGRID" id="1209973">
    <property type="interactions" value="2"/>
</dbReference>
<dbReference type="FunCoup" id="Q8IBS5">
    <property type="interactions" value="3"/>
</dbReference>
<dbReference type="IntAct" id="Q8IBS5">
    <property type="interactions" value="2"/>
</dbReference>
<dbReference type="STRING" id="36329.Q8IBS5"/>
<dbReference type="BindingDB" id="Q8IBS5"/>
<dbReference type="ChEMBL" id="CHEMBL2169725"/>
<dbReference type="DrugBank" id="DB11638">
    <property type="generic name" value="Artenimol"/>
</dbReference>
<dbReference type="PaxDb" id="5833-PF07_0072"/>
<dbReference type="EnsemblProtists" id="CAD50923">
    <property type="protein sequence ID" value="CAD50923"/>
    <property type="gene ID" value="PF3D7_0717500"/>
</dbReference>
<dbReference type="GeneID" id="2655116"/>
<dbReference type="KEGG" id="pfa:PF3D7_0717500"/>
<dbReference type="VEuPathDB" id="PlasmoDB:PF3D7_0717500"/>
<dbReference type="HOGENOM" id="CLU_000288_37_4_1"/>
<dbReference type="InParanoid" id="Q8IBS5"/>
<dbReference type="OMA" id="LEHEWIR"/>
<dbReference type="OrthoDB" id="40902at2759"/>
<dbReference type="PhylomeDB" id="Q8IBS5"/>
<dbReference type="Reactome" id="R-PFA-5687128">
    <property type="pathway name" value="MAPK6/MAPK4 signaling"/>
</dbReference>
<dbReference type="EvolutionaryTrace" id="Q8IBS5"/>
<dbReference type="Proteomes" id="UP000001450">
    <property type="component" value="Chromosome 7"/>
</dbReference>
<dbReference type="GO" id="GO:0005737">
    <property type="term" value="C:cytoplasm"/>
    <property type="evidence" value="ECO:0000318"/>
    <property type="project" value="GO_Central"/>
</dbReference>
<dbReference type="GO" id="GO:0005634">
    <property type="term" value="C:nucleus"/>
    <property type="evidence" value="ECO:0000318"/>
    <property type="project" value="GO_Central"/>
</dbReference>
<dbReference type="GO" id="GO:0005886">
    <property type="term" value="C:plasma membrane"/>
    <property type="evidence" value="ECO:0007669"/>
    <property type="project" value="UniProtKB-SubCell"/>
</dbReference>
<dbReference type="GO" id="GO:0005524">
    <property type="term" value="F:ATP binding"/>
    <property type="evidence" value="ECO:0007669"/>
    <property type="project" value="UniProtKB-KW"/>
</dbReference>
<dbReference type="GO" id="GO:0005509">
    <property type="term" value="F:calcium ion binding"/>
    <property type="evidence" value="ECO:0000314"/>
    <property type="project" value="GeneDB"/>
</dbReference>
<dbReference type="GO" id="GO:0009931">
    <property type="term" value="F:calcium-dependent protein serine/threonine kinase activity"/>
    <property type="evidence" value="ECO:0000314"/>
    <property type="project" value="UniProtKB"/>
</dbReference>
<dbReference type="GO" id="GO:0004723">
    <property type="term" value="F:calcium-dependent protein serine/threonine phosphatase activity"/>
    <property type="evidence" value="ECO:0000314"/>
    <property type="project" value="GeneDB"/>
</dbReference>
<dbReference type="GO" id="GO:0004683">
    <property type="term" value="F:calcium/calmodulin-dependent protein kinase activity"/>
    <property type="evidence" value="ECO:0000318"/>
    <property type="project" value="GO_Central"/>
</dbReference>
<dbReference type="GO" id="GO:0005516">
    <property type="term" value="F:calmodulin binding"/>
    <property type="evidence" value="ECO:0000318"/>
    <property type="project" value="GO_Central"/>
</dbReference>
<dbReference type="GO" id="GO:0003824">
    <property type="term" value="F:catalytic activity"/>
    <property type="evidence" value="ECO:0000314"/>
    <property type="project" value="GeneDB"/>
</dbReference>
<dbReference type="GO" id="GO:0106310">
    <property type="term" value="F:protein serine kinase activity"/>
    <property type="evidence" value="ECO:0007669"/>
    <property type="project" value="RHEA"/>
</dbReference>
<dbReference type="GO" id="GO:0030154">
    <property type="term" value="P:cell differentiation"/>
    <property type="evidence" value="ECO:0007669"/>
    <property type="project" value="UniProtKB-KW"/>
</dbReference>
<dbReference type="GO" id="GO:0035556">
    <property type="term" value="P:intracellular signal transduction"/>
    <property type="evidence" value="ECO:0000318"/>
    <property type="project" value="GO_Central"/>
</dbReference>
<dbReference type="GO" id="GO:0006468">
    <property type="term" value="P:protein phosphorylation"/>
    <property type="evidence" value="ECO:0000314"/>
    <property type="project" value="UniProtKB"/>
</dbReference>
<dbReference type="CDD" id="cd00051">
    <property type="entry name" value="EFh"/>
    <property type="match status" value="2"/>
</dbReference>
<dbReference type="CDD" id="cd05117">
    <property type="entry name" value="STKc_CAMK"/>
    <property type="match status" value="1"/>
</dbReference>
<dbReference type="FunFam" id="3.30.200.20:FF:000315">
    <property type="entry name" value="Calcium-dependent protein kinase 3"/>
    <property type="match status" value="1"/>
</dbReference>
<dbReference type="FunFam" id="1.10.238.10:FF:000174">
    <property type="entry name" value="Calcium-dependent protein kinase 4"/>
    <property type="match status" value="1"/>
</dbReference>
<dbReference type="FunFam" id="1.10.510.10:FF:000568">
    <property type="entry name" value="Calmodulin-domain protein kinase 1"/>
    <property type="match status" value="1"/>
</dbReference>
<dbReference type="Gene3D" id="1.10.238.10">
    <property type="entry name" value="EF-hand"/>
    <property type="match status" value="2"/>
</dbReference>
<dbReference type="Gene3D" id="3.30.200.20">
    <property type="entry name" value="Phosphorylase Kinase, domain 1"/>
    <property type="match status" value="1"/>
</dbReference>
<dbReference type="Gene3D" id="1.10.510.10">
    <property type="entry name" value="Transferase(Phosphotransferase) domain 1"/>
    <property type="match status" value="1"/>
</dbReference>
<dbReference type="InterPro" id="IPR050205">
    <property type="entry name" value="CDPK_Ser/Thr_kinases"/>
</dbReference>
<dbReference type="InterPro" id="IPR011992">
    <property type="entry name" value="EF-hand-dom_pair"/>
</dbReference>
<dbReference type="InterPro" id="IPR018247">
    <property type="entry name" value="EF_Hand_1_Ca_BS"/>
</dbReference>
<dbReference type="InterPro" id="IPR002048">
    <property type="entry name" value="EF_hand_dom"/>
</dbReference>
<dbReference type="InterPro" id="IPR011009">
    <property type="entry name" value="Kinase-like_dom_sf"/>
</dbReference>
<dbReference type="InterPro" id="IPR000719">
    <property type="entry name" value="Prot_kinase_dom"/>
</dbReference>
<dbReference type="InterPro" id="IPR017441">
    <property type="entry name" value="Protein_kinase_ATP_BS"/>
</dbReference>
<dbReference type="InterPro" id="IPR008271">
    <property type="entry name" value="Ser/Thr_kinase_AS"/>
</dbReference>
<dbReference type="PANTHER" id="PTHR24349">
    <property type="entry name" value="SERINE/THREONINE-PROTEIN KINASE"/>
    <property type="match status" value="1"/>
</dbReference>
<dbReference type="Pfam" id="PF13499">
    <property type="entry name" value="EF-hand_7"/>
    <property type="match status" value="2"/>
</dbReference>
<dbReference type="Pfam" id="PF00069">
    <property type="entry name" value="Pkinase"/>
    <property type="match status" value="1"/>
</dbReference>
<dbReference type="SMART" id="SM00054">
    <property type="entry name" value="EFh"/>
    <property type="match status" value="4"/>
</dbReference>
<dbReference type="SMART" id="SM00220">
    <property type="entry name" value="S_TKc"/>
    <property type="match status" value="1"/>
</dbReference>
<dbReference type="SUPFAM" id="SSF47473">
    <property type="entry name" value="EF-hand"/>
    <property type="match status" value="1"/>
</dbReference>
<dbReference type="SUPFAM" id="SSF56112">
    <property type="entry name" value="Protein kinase-like (PK-like)"/>
    <property type="match status" value="1"/>
</dbReference>
<dbReference type="PROSITE" id="PS00018">
    <property type="entry name" value="EF_HAND_1"/>
    <property type="match status" value="4"/>
</dbReference>
<dbReference type="PROSITE" id="PS50222">
    <property type="entry name" value="EF_HAND_2"/>
    <property type="match status" value="4"/>
</dbReference>
<dbReference type="PROSITE" id="PS00107">
    <property type="entry name" value="PROTEIN_KINASE_ATP"/>
    <property type="match status" value="1"/>
</dbReference>
<dbReference type="PROSITE" id="PS50011">
    <property type="entry name" value="PROTEIN_KINASE_DOM"/>
    <property type="match status" value="1"/>
</dbReference>
<dbReference type="PROSITE" id="PS00108">
    <property type="entry name" value="PROTEIN_KINASE_ST"/>
    <property type="match status" value="1"/>
</dbReference>
<evidence type="ECO:0000250" key="1">
    <source>
        <dbReference type="UniProtKB" id="P62345"/>
    </source>
</evidence>
<evidence type="ECO:0000255" key="2">
    <source>
        <dbReference type="PROSITE-ProRule" id="PRU00159"/>
    </source>
</evidence>
<evidence type="ECO:0000255" key="3">
    <source>
        <dbReference type="PROSITE-ProRule" id="PRU00448"/>
    </source>
</evidence>
<evidence type="ECO:0000255" key="4">
    <source>
        <dbReference type="PROSITE-ProRule" id="PRU10027"/>
    </source>
</evidence>
<evidence type="ECO:0000256" key="5">
    <source>
        <dbReference type="SAM" id="MobiDB-lite"/>
    </source>
</evidence>
<evidence type="ECO:0000269" key="6">
    <source>
    </source>
</evidence>
<evidence type="ECO:0000269" key="7">
    <source>
    </source>
</evidence>
<evidence type="ECO:0000269" key="8">
    <source>
    </source>
</evidence>
<evidence type="ECO:0000269" key="9">
    <source>
    </source>
</evidence>
<evidence type="ECO:0000303" key="10">
    <source>
    </source>
</evidence>
<evidence type="ECO:0000305" key="11"/>
<evidence type="ECO:0000305" key="12">
    <source>
    </source>
</evidence>
<evidence type="ECO:0007744" key="13">
    <source>
        <dbReference type="PDB" id="4QOX"/>
    </source>
</evidence>
<evidence type="ECO:0007744" key="14">
    <source>
        <dbReference type="PDB" id="4RGJ"/>
    </source>
</evidence>
<evidence type="ECO:0007829" key="15">
    <source>
        <dbReference type="PDB" id="4QOX"/>
    </source>
</evidence>
<evidence type="ECO:0007829" key="16">
    <source>
        <dbReference type="PDB" id="4RGJ"/>
    </source>
</evidence>
<reference key="1">
    <citation type="journal article" date="2002" name="Nature">
        <title>Genome sequence of the human malaria parasite Plasmodium falciparum.</title>
        <authorList>
            <person name="Gardner M.J."/>
            <person name="Hall N."/>
            <person name="Fung E."/>
            <person name="White O."/>
            <person name="Berriman M."/>
            <person name="Hyman R.W."/>
            <person name="Carlton J.M."/>
            <person name="Pain A."/>
            <person name="Nelson K.E."/>
            <person name="Bowman S."/>
            <person name="Paulsen I.T."/>
            <person name="James K.D."/>
            <person name="Eisen J.A."/>
            <person name="Rutherford K.M."/>
            <person name="Salzberg S.L."/>
            <person name="Craig A."/>
            <person name="Kyes S."/>
            <person name="Chan M.-S."/>
            <person name="Nene V."/>
            <person name="Shallom S.J."/>
            <person name="Suh B."/>
            <person name="Peterson J."/>
            <person name="Angiuoli S."/>
            <person name="Pertea M."/>
            <person name="Allen J."/>
            <person name="Selengut J."/>
            <person name="Haft D."/>
            <person name="Mather M.W."/>
            <person name="Vaidya A.B."/>
            <person name="Martin D.M.A."/>
            <person name="Fairlamb A.H."/>
            <person name="Fraunholz M.J."/>
            <person name="Roos D.S."/>
            <person name="Ralph S.A."/>
            <person name="McFadden G.I."/>
            <person name="Cummings L.M."/>
            <person name="Subramanian G.M."/>
            <person name="Mungall C."/>
            <person name="Venter J.C."/>
            <person name="Carucci D.J."/>
            <person name="Hoffman S.L."/>
            <person name="Newbold C."/>
            <person name="Davis R.W."/>
            <person name="Fraser C.M."/>
            <person name="Barrell B.G."/>
        </authorList>
    </citation>
    <scope>NUCLEOTIDE SEQUENCE [LARGE SCALE GENOMIC DNA]</scope>
    <source>
        <strain>3D7</strain>
    </source>
</reference>
<reference key="2">
    <citation type="journal article" date="2002" name="Nature">
        <title>Sequence of Plasmodium falciparum chromosomes 1, 3-9 and 13.</title>
        <authorList>
            <person name="Hall N."/>
            <person name="Pain A."/>
            <person name="Berriman M."/>
            <person name="Churcher C.M."/>
            <person name="Harris B."/>
            <person name="Harris D."/>
            <person name="Mungall K.L."/>
            <person name="Bowman S."/>
            <person name="Atkin R."/>
            <person name="Baker S."/>
            <person name="Barron A."/>
            <person name="Brooks K."/>
            <person name="Buckee C.O."/>
            <person name="Burrows C."/>
            <person name="Cherevach I."/>
            <person name="Chillingworth C."/>
            <person name="Chillingworth T."/>
            <person name="Christodoulou Z."/>
            <person name="Clark L."/>
            <person name="Clark R."/>
            <person name="Corton C."/>
            <person name="Cronin A."/>
            <person name="Davies R.M."/>
            <person name="Davis P."/>
            <person name="Dear P."/>
            <person name="Dearden F."/>
            <person name="Doggett J."/>
            <person name="Feltwell T."/>
            <person name="Goble A."/>
            <person name="Goodhead I."/>
            <person name="Gwilliam R."/>
            <person name="Hamlin N."/>
            <person name="Hance Z."/>
            <person name="Harper D."/>
            <person name="Hauser H."/>
            <person name="Hornsby T."/>
            <person name="Holroyd S."/>
            <person name="Horrocks P."/>
            <person name="Humphray S."/>
            <person name="Jagels K."/>
            <person name="James K.D."/>
            <person name="Johnson D."/>
            <person name="Kerhornou A."/>
            <person name="Knights A."/>
            <person name="Konfortov B."/>
            <person name="Kyes S."/>
            <person name="Larke N."/>
            <person name="Lawson D."/>
            <person name="Lennard N."/>
            <person name="Line A."/>
            <person name="Maddison M."/>
            <person name="Mclean J."/>
            <person name="Mooney P."/>
            <person name="Moule S."/>
            <person name="Murphy L."/>
            <person name="Oliver K."/>
            <person name="Ormond D."/>
            <person name="Price C."/>
            <person name="Quail M.A."/>
            <person name="Rabbinowitsch E."/>
            <person name="Rajandream M.A."/>
            <person name="Rutter S."/>
            <person name="Rutherford K.M."/>
            <person name="Sanders M."/>
            <person name="Simmonds M."/>
            <person name="Seeger K."/>
            <person name="Sharp S."/>
            <person name="Smith R."/>
            <person name="Squares R."/>
            <person name="Squares S."/>
            <person name="Stevens K."/>
            <person name="Taylor K."/>
            <person name="Tivey A."/>
            <person name="Unwin L."/>
            <person name="Whitehead S."/>
            <person name="Woodward J.R."/>
            <person name="Sulston J.E."/>
            <person name="Craig A."/>
            <person name="Newbold C."/>
            <person name="Barrell B.G."/>
        </authorList>
    </citation>
    <scope>NUCLEOTIDE SEQUENCE [LARGE SCALE GENOMIC DNA]</scope>
    <source>
        <strain>3D7</strain>
    </source>
</reference>
<reference key="3">
    <citation type="journal article" date="2002" name="Nature">
        <title>Analysis of the Plasmodium falciparum proteome by high-accuracy mass spectrometry.</title>
        <authorList>
            <person name="Lasonder E."/>
            <person name="Ishihama Y."/>
            <person name="Andersen J.S."/>
            <person name="Vermunt A.M.W."/>
            <person name="Pain A."/>
            <person name="Sauerwein R.W."/>
            <person name="Eling W.M.C."/>
            <person name="Hall N."/>
            <person name="Waters A.P."/>
            <person name="Stunnenberg H.G."/>
            <person name="Mann M."/>
        </authorList>
    </citation>
    <scope>IDENTIFICATION BY MASS SPECTROMETRY</scope>
    <scope>DEVELOPMENTAL STAGE</scope>
</reference>
<reference key="4">
    <citation type="journal article" date="2009" name="J. Biol. Chem.">
        <title>Dissection of mechanisms involved in the regulation of Plasmodium falciparum calcium-dependent protein kinase 4.</title>
        <authorList>
            <person name="Ranjan R."/>
            <person name="Ahmed A."/>
            <person name="Gourinath S."/>
            <person name="Sharma P."/>
        </authorList>
    </citation>
    <scope>FUNCTION</scope>
    <scope>CATALYTIC ACTIVITY</scope>
    <scope>ACTIVITY REGULATION</scope>
    <scope>SUBCELLULAR LOCATION</scope>
    <scope>DEVELOPMENTAL STAGE</scope>
    <scope>MUTAGENESIS OF 219-SER-THR-220; THR-234; 350-ASN--TYR-528; 350-ASN--LYS-379; 360-LEU--TYR-528; LEU-360 AND 370-SER--TYR-528</scope>
</reference>
<reference key="5">
    <citation type="journal article" date="2009" name="Parasitol. Int.">
        <title>Characterization of Plasmodium falciparum calcium-dependent protein kinase 4.</title>
        <authorList>
            <person name="Kato K."/>
            <person name="Sudo A."/>
            <person name="Kobayashi K."/>
            <person name="Sugi T."/>
            <person name="Tohya Y."/>
            <person name="Akashi H."/>
        </authorList>
    </citation>
    <scope>FUNCTION</scope>
    <scope>CATALYTIC ACTIVITY</scope>
    <scope>COFACTOR</scope>
    <scope>ACTIVITY REGULATION</scope>
    <scope>BIOPHYSICOCHEMICAL PROPERTIES</scope>
    <scope>DEVELOPMENTAL STAGE</scope>
    <scope>INDUCTION</scope>
    <scope>MUTAGENESIS OF LYS-99</scope>
</reference>
<reference key="6">
    <citation type="journal article" date="2010" name="Science">
        <title>A plant-like kinase in Plasmodium falciparum regulates parasite egress from erythrocytes.</title>
        <authorList>
            <person name="Dvorin J.D."/>
            <person name="Martyn D.C."/>
            <person name="Patel S.D."/>
            <person name="Grimley J.S."/>
            <person name="Collins C.R."/>
            <person name="Hopp C.S."/>
            <person name="Bright A.T."/>
            <person name="Westenberger S."/>
            <person name="Winzeler E."/>
            <person name="Blackman M.J."/>
            <person name="Baker D.A."/>
            <person name="Wandless T.J."/>
            <person name="Duraisingh M.T."/>
        </authorList>
    </citation>
    <scope>DISRUPTION PHENOTYPE</scope>
</reference>
<reference evidence="13 14" key="7">
    <citation type="submission" date="2014-09" db="PDB data bank">
        <title>Apo crystal structure of CDPK4 from Plasmodium falciparum, PF3D7_0717500.</title>
        <authorList>
            <person name="Wernimont A.K."/>
            <person name="Walker J.R."/>
            <person name="Hutchinson A."/>
            <person name="Seitova A."/>
            <person name="He H."/>
            <person name="Loppnau P."/>
            <person name="Neculai M."/>
            <person name="Amani M."/>
            <person name="Lin Y.H."/>
            <person name="Ravichandran M."/>
            <person name="Arrowsmith C.H."/>
            <person name="Edwards A.M."/>
            <person name="Bountra C."/>
            <person name="Hui R."/>
            <person name="Lovato D.V."/>
        </authorList>
    </citation>
    <scope>X-RAY CRYSTALLOGRAPHY (2.30 ANGSTROMS) OF 10-528</scope>
</reference>
<feature type="initiator methionine" description="Removed" evidence="11">
    <location>
        <position position="1"/>
    </location>
</feature>
<feature type="chain" id="PRO_0000085842" description="Calcium-dependent protein kinase 4">
    <location>
        <begin position="2"/>
        <end position="528"/>
    </location>
</feature>
<feature type="domain" description="Protein kinase" evidence="2">
    <location>
        <begin position="71"/>
        <end position="329"/>
    </location>
</feature>
<feature type="domain" description="EF-hand 1" evidence="3">
    <location>
        <begin position="376"/>
        <end position="411"/>
    </location>
</feature>
<feature type="domain" description="EF-hand 2" evidence="3">
    <location>
        <begin position="427"/>
        <end position="458"/>
    </location>
</feature>
<feature type="domain" description="EF-hand 3" evidence="3">
    <location>
        <begin position="459"/>
        <end position="494"/>
    </location>
</feature>
<feature type="domain" description="EF-hand 4" evidence="3">
    <location>
        <begin position="496"/>
        <end position="528"/>
    </location>
</feature>
<feature type="region of interest" description="Disordered" evidence="5">
    <location>
        <begin position="1"/>
        <end position="36"/>
    </location>
</feature>
<feature type="region of interest" description="J domain" evidence="7">
    <location>
        <begin position="350"/>
        <end position="386"/>
    </location>
</feature>
<feature type="short sequence motif" description="J domain autoinhibitory motif" evidence="7">
    <location>
        <begin position="350"/>
        <end position="358"/>
    </location>
</feature>
<feature type="short sequence motif" description="J domain EF-hand interaction motif" evidence="7">
    <location>
        <begin position="359"/>
        <end position="368"/>
    </location>
</feature>
<feature type="compositionally biased region" description="Basic residues" evidence="5">
    <location>
        <begin position="14"/>
        <end position="23"/>
    </location>
</feature>
<feature type="active site" description="Proton acceptor" evidence="2 4">
    <location>
        <position position="193"/>
    </location>
</feature>
<feature type="binding site" evidence="2">
    <location>
        <begin position="76"/>
        <end position="84"/>
    </location>
    <ligand>
        <name>ATP</name>
        <dbReference type="ChEBI" id="CHEBI:30616"/>
    </ligand>
</feature>
<feature type="binding site" evidence="2">
    <location>
        <position position="99"/>
    </location>
    <ligand>
        <name>ATP</name>
        <dbReference type="ChEBI" id="CHEBI:30616"/>
    </ligand>
</feature>
<feature type="binding site" evidence="3">
    <location>
        <position position="389"/>
    </location>
    <ligand>
        <name>Ca(2+)</name>
        <dbReference type="ChEBI" id="CHEBI:29108"/>
        <label>1</label>
    </ligand>
</feature>
<feature type="binding site" evidence="3">
    <location>
        <position position="391"/>
    </location>
    <ligand>
        <name>Ca(2+)</name>
        <dbReference type="ChEBI" id="CHEBI:29108"/>
        <label>1</label>
    </ligand>
</feature>
<feature type="binding site" evidence="3">
    <location>
        <position position="393"/>
    </location>
    <ligand>
        <name>Ca(2+)</name>
        <dbReference type="ChEBI" id="CHEBI:29108"/>
        <label>1</label>
    </ligand>
</feature>
<feature type="binding site" evidence="3">
    <location>
        <position position="395"/>
    </location>
    <ligand>
        <name>Ca(2+)</name>
        <dbReference type="ChEBI" id="CHEBI:29108"/>
        <label>1</label>
    </ligand>
</feature>
<feature type="binding site" evidence="3">
    <location>
        <position position="400"/>
    </location>
    <ligand>
        <name>Ca(2+)</name>
        <dbReference type="ChEBI" id="CHEBI:29108"/>
        <label>1</label>
    </ligand>
</feature>
<feature type="binding site" evidence="3">
    <location>
        <position position="436"/>
    </location>
    <ligand>
        <name>Ca(2+)</name>
        <dbReference type="ChEBI" id="CHEBI:29108"/>
        <label>2</label>
    </ligand>
</feature>
<feature type="binding site" evidence="3">
    <location>
        <position position="438"/>
    </location>
    <ligand>
        <name>Ca(2+)</name>
        <dbReference type="ChEBI" id="CHEBI:29108"/>
        <label>2</label>
    </ligand>
</feature>
<feature type="binding site" evidence="3">
    <location>
        <position position="440"/>
    </location>
    <ligand>
        <name>Ca(2+)</name>
        <dbReference type="ChEBI" id="CHEBI:29108"/>
        <label>2</label>
    </ligand>
</feature>
<feature type="binding site" evidence="3">
    <location>
        <position position="442"/>
    </location>
    <ligand>
        <name>Ca(2+)</name>
        <dbReference type="ChEBI" id="CHEBI:29108"/>
        <label>2</label>
    </ligand>
</feature>
<feature type="binding site" evidence="3">
    <location>
        <position position="447"/>
    </location>
    <ligand>
        <name>Ca(2+)</name>
        <dbReference type="ChEBI" id="CHEBI:29108"/>
        <label>2</label>
    </ligand>
</feature>
<feature type="binding site" evidence="3">
    <location>
        <position position="472"/>
    </location>
    <ligand>
        <name>Ca(2+)</name>
        <dbReference type="ChEBI" id="CHEBI:29108"/>
        <label>3</label>
    </ligand>
</feature>
<feature type="binding site" evidence="3">
    <location>
        <position position="474"/>
    </location>
    <ligand>
        <name>Ca(2+)</name>
        <dbReference type="ChEBI" id="CHEBI:29108"/>
        <label>3</label>
    </ligand>
</feature>
<feature type="binding site" evidence="3">
    <location>
        <position position="476"/>
    </location>
    <ligand>
        <name>Ca(2+)</name>
        <dbReference type="ChEBI" id="CHEBI:29108"/>
        <label>3</label>
    </ligand>
</feature>
<feature type="binding site" evidence="3">
    <location>
        <position position="478"/>
    </location>
    <ligand>
        <name>Ca(2+)</name>
        <dbReference type="ChEBI" id="CHEBI:29108"/>
        <label>3</label>
    </ligand>
</feature>
<feature type="binding site" evidence="3">
    <location>
        <position position="483"/>
    </location>
    <ligand>
        <name>Ca(2+)</name>
        <dbReference type="ChEBI" id="CHEBI:29108"/>
        <label>3</label>
    </ligand>
</feature>
<feature type="binding site" evidence="3">
    <location>
        <position position="506"/>
    </location>
    <ligand>
        <name>Ca(2+)</name>
        <dbReference type="ChEBI" id="CHEBI:29108"/>
        <label>4</label>
    </ligand>
</feature>
<feature type="binding site" evidence="3">
    <location>
        <position position="508"/>
    </location>
    <ligand>
        <name>Ca(2+)</name>
        <dbReference type="ChEBI" id="CHEBI:29108"/>
        <label>4</label>
    </ligand>
</feature>
<feature type="binding site" evidence="3">
    <location>
        <position position="510"/>
    </location>
    <ligand>
        <name>Ca(2+)</name>
        <dbReference type="ChEBI" id="CHEBI:29108"/>
        <label>4</label>
    </ligand>
</feature>
<feature type="binding site" evidence="3">
    <location>
        <position position="512"/>
    </location>
    <ligand>
        <name>Ca(2+)</name>
        <dbReference type="ChEBI" id="CHEBI:29108"/>
        <label>4</label>
    </ligand>
</feature>
<feature type="binding site" evidence="3">
    <location>
        <position position="517"/>
    </location>
    <ligand>
        <name>Ca(2+)</name>
        <dbReference type="ChEBI" id="CHEBI:29108"/>
        <label>4</label>
    </ligand>
</feature>
<feature type="lipid moiety-binding region" description="N-myristoyl glycine" evidence="1">
    <location>
        <position position="2"/>
    </location>
</feature>
<feature type="mutagenesis site" description="Loss of catalytic activity." evidence="8">
    <original>K</original>
    <variation>A</variation>
    <location>
        <position position="99"/>
    </location>
</feature>
<feature type="mutagenesis site" description="No effect on catalytic activity and auto-phosphorylation." evidence="7">
    <original>ST</original>
    <variation>AA</variation>
    <location>
        <begin position="219"/>
        <end position="220"/>
    </location>
</feature>
<feature type="mutagenesis site" description="Loss of catalytic activity and auto-phosphorylation." evidence="7">
    <original>T</original>
    <variation>A</variation>
    <location>
        <position position="234"/>
    </location>
</feature>
<feature type="mutagenesis site" description="Constitutively active." evidence="7">
    <location>
        <begin position="350"/>
        <end position="528"/>
    </location>
</feature>
<feature type="mutagenesis site" description="Partial loss of catalytic activity. Is active in absence of calcium." evidence="7">
    <location>
        <begin position="350"/>
        <end position="379"/>
    </location>
</feature>
<feature type="mutagenesis site" description="Loss of catalytic activity in absence or in presence of calcium." evidence="7">
    <location>
        <begin position="360"/>
        <end position="528"/>
    </location>
</feature>
<feature type="mutagenesis site" description="Partial loss of catalytic activity in presence of calcium." evidence="7">
    <original>L</original>
    <variation>A</variation>
    <location>
        <position position="360"/>
    </location>
</feature>
<feature type="mutagenesis site" description="No effect on catalytic activity. Is active in absence of calcium." evidence="7">
    <location>
        <begin position="370"/>
        <end position="528"/>
    </location>
</feature>
<feature type="helix" evidence="16">
    <location>
        <begin position="41"/>
        <end position="44"/>
    </location>
</feature>
<feature type="helix" evidence="16">
    <location>
        <begin position="60"/>
        <end position="62"/>
    </location>
</feature>
<feature type="turn" evidence="16">
    <location>
        <begin position="67"/>
        <end position="69"/>
    </location>
</feature>
<feature type="strand" evidence="16">
    <location>
        <begin position="70"/>
        <end position="79"/>
    </location>
</feature>
<feature type="strand" evidence="16">
    <location>
        <begin position="82"/>
        <end position="89"/>
    </location>
</feature>
<feature type="turn" evidence="16">
    <location>
        <begin position="90"/>
        <end position="92"/>
    </location>
</feature>
<feature type="strand" evidence="16">
    <location>
        <begin position="95"/>
        <end position="102"/>
    </location>
</feature>
<feature type="turn" evidence="16">
    <location>
        <begin position="103"/>
        <end position="105"/>
    </location>
</feature>
<feature type="strand" evidence="16">
    <location>
        <begin position="107"/>
        <end position="110"/>
    </location>
</feature>
<feature type="helix" evidence="16">
    <location>
        <begin position="112"/>
        <end position="122"/>
    </location>
</feature>
<feature type="strand" evidence="16">
    <location>
        <begin position="133"/>
        <end position="138"/>
    </location>
</feature>
<feature type="strand" evidence="16">
    <location>
        <begin position="140"/>
        <end position="147"/>
    </location>
</feature>
<feature type="strand" evidence="16">
    <location>
        <begin position="152"/>
        <end position="154"/>
    </location>
</feature>
<feature type="helix" evidence="16">
    <location>
        <begin position="155"/>
        <end position="161"/>
    </location>
</feature>
<feature type="helix" evidence="16">
    <location>
        <begin position="167"/>
        <end position="186"/>
    </location>
</feature>
<feature type="helix" evidence="16">
    <location>
        <begin position="196"/>
        <end position="198"/>
    </location>
</feature>
<feature type="strand" evidence="16">
    <location>
        <begin position="199"/>
        <end position="202"/>
    </location>
</feature>
<feature type="strand" evidence="16">
    <location>
        <begin position="210"/>
        <end position="213"/>
    </location>
</feature>
<feature type="helix" evidence="16">
    <location>
        <begin position="219"/>
        <end position="221"/>
    </location>
</feature>
<feature type="strand" evidence="15">
    <location>
        <begin position="222"/>
        <end position="224"/>
    </location>
</feature>
<feature type="helix" evidence="16">
    <location>
        <begin position="234"/>
        <end position="236"/>
    </location>
</feature>
<feature type="helix" evidence="16">
    <location>
        <begin position="240"/>
        <end position="243"/>
    </location>
</feature>
<feature type="helix" evidence="16">
    <location>
        <begin position="251"/>
        <end position="265"/>
    </location>
</feature>
<feature type="helix" evidence="16">
    <location>
        <begin position="275"/>
        <end position="284"/>
    </location>
</feature>
<feature type="helix" evidence="16">
    <location>
        <begin position="292"/>
        <end position="296"/>
    </location>
</feature>
<feature type="helix" evidence="16">
    <location>
        <begin position="299"/>
        <end position="308"/>
    </location>
</feature>
<feature type="helix" evidence="16">
    <location>
        <begin position="313"/>
        <end position="315"/>
    </location>
</feature>
<feature type="helix" evidence="16">
    <location>
        <begin position="319"/>
        <end position="323"/>
    </location>
</feature>
<feature type="helix" evidence="16">
    <location>
        <begin position="326"/>
        <end position="332"/>
    </location>
</feature>
<feature type="helix" evidence="16">
    <location>
        <begin position="348"/>
        <end position="388"/>
    </location>
</feature>
<feature type="strand" evidence="16">
    <location>
        <begin position="392"/>
        <end position="397"/>
    </location>
</feature>
<feature type="helix" evidence="16">
    <location>
        <begin position="398"/>
        <end position="412"/>
    </location>
</feature>
<feature type="helix" evidence="16">
    <location>
        <begin position="418"/>
        <end position="432"/>
    </location>
</feature>
<feature type="strand" evidence="16">
    <location>
        <begin position="441"/>
        <end position="444"/>
    </location>
</feature>
<feature type="helix" evidence="16">
    <location>
        <begin position="445"/>
        <end position="471"/>
    </location>
</feature>
<feature type="turn" evidence="16">
    <location>
        <begin position="472"/>
        <end position="474"/>
    </location>
</feature>
<feature type="strand" evidence="15">
    <location>
        <begin position="477"/>
        <end position="479"/>
    </location>
</feature>
<feature type="helix" evidence="16">
    <location>
        <begin position="481"/>
        <end position="490"/>
    </location>
</feature>
<feature type="helix" evidence="16">
    <location>
        <begin position="495"/>
        <end position="505"/>
    </location>
</feature>
<feature type="strand" evidence="16">
    <location>
        <begin position="511"/>
        <end position="513"/>
    </location>
</feature>
<feature type="helix" evidence="16">
    <location>
        <begin position="515"/>
        <end position="527"/>
    </location>
</feature>
<organism>
    <name type="scientific">Plasmodium falciparum (isolate 3D7)</name>
    <dbReference type="NCBI Taxonomy" id="36329"/>
    <lineage>
        <taxon>Eukaryota</taxon>
        <taxon>Sar</taxon>
        <taxon>Alveolata</taxon>
        <taxon>Apicomplexa</taxon>
        <taxon>Aconoidasida</taxon>
        <taxon>Haemosporida</taxon>
        <taxon>Plasmodiidae</taxon>
        <taxon>Plasmodium</taxon>
        <taxon>Plasmodium (Laverania)</taxon>
    </lineage>
</organism>
<accession>Q8IBS5</accession>
<name>CDPK4_PLAF7</name>
<keyword id="KW-0002">3D-structure</keyword>
<keyword id="KW-0067">ATP-binding</keyword>
<keyword id="KW-0106">Calcium</keyword>
<keyword id="KW-1003">Cell membrane</keyword>
<keyword id="KW-0963">Cytoplasm</keyword>
<keyword id="KW-0217">Developmental protein</keyword>
<keyword id="KW-0221">Differentiation</keyword>
<keyword id="KW-0418">Kinase</keyword>
<keyword id="KW-0449">Lipoprotein</keyword>
<keyword id="KW-0460">Magnesium</keyword>
<keyword id="KW-0472">Membrane</keyword>
<keyword id="KW-0479">Metal-binding</keyword>
<keyword id="KW-0519">Myristate</keyword>
<keyword id="KW-0547">Nucleotide-binding</keyword>
<keyword id="KW-0597">Phosphoprotein</keyword>
<keyword id="KW-1185">Reference proteome</keyword>
<keyword id="KW-0677">Repeat</keyword>
<keyword id="KW-0723">Serine/threonine-protein kinase</keyword>
<keyword id="KW-0808">Transferase</keyword>
<proteinExistence type="evidence at protein level"/>
<protein>
    <recommendedName>
        <fullName evidence="10">Calcium-dependent protein kinase 4</fullName>
        <ecNumber evidence="7 8">2.7.11.1</ecNumber>
    </recommendedName>
    <alternativeName>
        <fullName evidence="10">PfCDPK4</fullName>
    </alternativeName>
</protein>
<gene>
    <name evidence="10" type="primary">CDPK4</name>
    <name type="synonym">CPK4</name>
    <name type="ORF">PF3D7_0717500</name>
</gene>
<sequence length="528" mass="60780">MGQEVSSVNNTKNEHHKTNKKSLKGGNERHEMKESSVGISKKIVENSFNNSKLRPGMFIQNSNVVFNEQYKGIKILGKGSFGEVILSRDKHTGHEYAIKVISKKHVKRKTDKESLLREVELLKMLDHINIMKLYEFFEDNNYYYLVSDVYTGGELFDEIISRKRFYEIDAARIIKQILSGITYMHKNNVVHRDLKPENILLETKNKEDMIIKIIDFGLSTHFEYSKKMKDKIGTAYYIAPDVLHGTYDEKCDIWSCGVILYILLSGCPPFNGSNEYDILKKVEAGKYTFDLPQFKKISDKAKDLIKKMLMYTSAVRISARDALEHEWIKMMTSKDNLNIDIPSLELSIANIRQFQSTQKLAQAALLYMGSKLTTIDETKELTKIFKKMDKNGDGQLDRNELIIGYKELLKLKGEDTSDLDNAAIEYEVDQILNSIDLDQNGYIEYSEFLTVSIDRKLLLSTERLEKAFKLFDKDGSGKISANELAQLFGLSDVSSECWKTVLKEVDQNNDGEIDFKEFRDMLVKLCNY</sequence>
<comment type="function">
    <text evidence="1 7 8">Calcium-dependent protein kinase which acts as a sensor and effector of intracellular Ca(2+) levels probably in part downstream of cGMP-activated PKG kinase (PubMed:19307175, PubMed:19666141). Plays a central role in the host erythrocytes and hepatocytes infection cycles, sexual reproduction and mosquito transmission of the parasite. During the liver stage, involved in sporozoite motility and thus in sporozoite invasion of host hepatocytes, probably together with CDPK1 and CDPK5. Involved in merosome egress from host hepatocytes, probably together with CDPK5. During the asexual blood stage, involved in merozoite invasion of host erythrocytes and motility by stabilizing the inner membrane complex, a structure below the plasma membrane which acts as an anchor for the glidosome, an acto-myosin motor. Required for cell cycle progression in the male gametocyte. During male gametogenesis in the mosquito gut, required to initiate the first round of DNA replication, probably by facilitating the assembly of the pre-replicative MCM complex, to assemble the first mitotic spindle and, at the end of gametogenesis, to initiate axoneme motility, cytokinesis and subsequent exflagellation. For each of these steps, may phosphorylate SOC1, SOC2 and SOC3, respectively. Together with CDPK1, regulates ookinete gliding in the mosquito host midgut (By similarity).</text>
</comment>
<comment type="catalytic activity">
    <reaction evidence="7 8">
        <text>L-seryl-[protein] + ATP = O-phospho-L-seryl-[protein] + ADP + H(+)</text>
        <dbReference type="Rhea" id="RHEA:17989"/>
        <dbReference type="Rhea" id="RHEA-COMP:9863"/>
        <dbReference type="Rhea" id="RHEA-COMP:11604"/>
        <dbReference type="ChEBI" id="CHEBI:15378"/>
        <dbReference type="ChEBI" id="CHEBI:29999"/>
        <dbReference type="ChEBI" id="CHEBI:30616"/>
        <dbReference type="ChEBI" id="CHEBI:83421"/>
        <dbReference type="ChEBI" id="CHEBI:456216"/>
        <dbReference type="EC" id="2.7.11.1"/>
    </reaction>
</comment>
<comment type="catalytic activity">
    <reaction evidence="7 8">
        <text>L-threonyl-[protein] + ATP = O-phospho-L-threonyl-[protein] + ADP + H(+)</text>
        <dbReference type="Rhea" id="RHEA:46608"/>
        <dbReference type="Rhea" id="RHEA-COMP:11060"/>
        <dbReference type="Rhea" id="RHEA-COMP:11605"/>
        <dbReference type="ChEBI" id="CHEBI:15378"/>
        <dbReference type="ChEBI" id="CHEBI:30013"/>
        <dbReference type="ChEBI" id="CHEBI:30616"/>
        <dbReference type="ChEBI" id="CHEBI:61977"/>
        <dbReference type="ChEBI" id="CHEBI:456216"/>
        <dbReference type="EC" id="2.7.11.1"/>
    </reaction>
</comment>
<comment type="cofactor">
    <cofactor evidence="8">
        <name>Mg(2+)</name>
        <dbReference type="ChEBI" id="CHEBI:18420"/>
    </cofactor>
</comment>
<comment type="activity regulation">
    <text evidence="7 8 12">Activated by calcium (PubMed:19307175, PubMed:19666141). Upon calcium binding to the EF-hand domains, the C-terminus of the junction domain (J domain) undergoes a conformational change which results in the dissociation of the pseudo-substrate inhibitory motif from the catalytic domain (PubMed:19307175). This, in turn, may facilitate the autophosphorylation of the activation loop at Thr-234, which leads to the kinase activation (PubMed:19307175). Intracellular calcium increase is triggered by xanthurenic acid (XA), a small mosquito molecule that induces the differentiation of specialized transmission stages, the gametocytes, into male and female gametes (Probable). Activated by a decrease in temperature (20 degrees Celsius) and an increase in pH (7.6) occurring when the parasite is ingested by in the mosquito (PubMed:19666141).</text>
</comment>
<comment type="biophysicochemical properties">
    <phDependence>
        <text evidence="8">Optimum pH is 7.5-8 (at 20 degrees Celsius).</text>
    </phDependence>
    <temperatureDependence>
        <text evidence="8">Optimum temperature is 20-30 degrees Celsius (at pH 7.6).</text>
    </temperatureDependence>
</comment>
<comment type="subunit">
    <text evidence="1">May interact with the pre-replication MCM complex prior male gametogenesis activation.</text>
</comment>
<comment type="subcellular location">
    <subcellularLocation>
        <location evidence="1">Cytoplasm</location>
    </subcellularLocation>
    <subcellularLocation>
        <location evidence="7">Cell membrane</location>
        <topology evidence="10">Lipid-anchor</topology>
    </subcellularLocation>
</comment>
<comment type="developmental stage">
    <text evidence="6 7 8">Expressed in gametocytes (at protein level).</text>
</comment>
<comment type="induction">
    <text evidence="8">Induced by xanthurenic acid (XA) and human serum.</text>
</comment>
<comment type="domain">
    <text evidence="7">The junction domain (J domain) is composed of 2 motifs that maintain the kinase inactive (PubMed:19307175). The N-terminal autoinhibitory motif acts as a pseudosubstrate inhibiting the catalytic domain while the C-terminal motif binds the EF-hand domains (PubMed:19307175).</text>
</comment>
<comment type="PTM">
    <text evidence="1">Myristoylated; myristoylation may target it to different subcellular compartments. During male gametogenesis, myristoylation is required to initiate DNA replication but not for mitotic spindle assembly or axoneme activation.</text>
</comment>
<comment type="PTM">
    <text evidence="1">Not palmitoylated.</text>
</comment>
<comment type="PTM">
    <text evidence="7 8">May be autophosphorylated on Thr-234 in vitro.</text>
</comment>
<comment type="disruption phenotype">
    <text evidence="9">Replication in host erythrocytes is normal.</text>
</comment>
<comment type="similarity">
    <text evidence="2">Belongs to the protein kinase superfamily. Ser/Thr protein kinase family. CDPK subfamily.</text>
</comment>